<reference key="1">
    <citation type="journal article" date="2009" name="Appl. Environ. Microbiol.">
        <title>Three genomes from the phylum Acidobacteria provide insight into the lifestyles of these microorganisms in soils.</title>
        <authorList>
            <person name="Ward N.L."/>
            <person name="Challacombe J.F."/>
            <person name="Janssen P.H."/>
            <person name="Henrissat B."/>
            <person name="Coutinho P.M."/>
            <person name="Wu M."/>
            <person name="Xie G."/>
            <person name="Haft D.H."/>
            <person name="Sait M."/>
            <person name="Badger J."/>
            <person name="Barabote R.D."/>
            <person name="Bradley B."/>
            <person name="Brettin T.S."/>
            <person name="Brinkac L.M."/>
            <person name="Bruce D."/>
            <person name="Creasy T."/>
            <person name="Daugherty S.C."/>
            <person name="Davidsen T.M."/>
            <person name="DeBoy R.T."/>
            <person name="Detter J.C."/>
            <person name="Dodson R.J."/>
            <person name="Durkin A.S."/>
            <person name="Ganapathy A."/>
            <person name="Gwinn-Giglio M."/>
            <person name="Han C.S."/>
            <person name="Khouri H."/>
            <person name="Kiss H."/>
            <person name="Kothari S.P."/>
            <person name="Madupu R."/>
            <person name="Nelson K.E."/>
            <person name="Nelson W.C."/>
            <person name="Paulsen I."/>
            <person name="Penn K."/>
            <person name="Ren Q."/>
            <person name="Rosovitz M.J."/>
            <person name="Selengut J.D."/>
            <person name="Shrivastava S."/>
            <person name="Sullivan S.A."/>
            <person name="Tapia R."/>
            <person name="Thompson L.S."/>
            <person name="Watkins K.L."/>
            <person name="Yang Q."/>
            <person name="Yu C."/>
            <person name="Zafar N."/>
            <person name="Zhou L."/>
            <person name="Kuske C.R."/>
        </authorList>
    </citation>
    <scope>NUCLEOTIDE SEQUENCE [LARGE SCALE GENOMIC DNA]</scope>
    <source>
        <strain>ATCC 51196 / DSM 11244 / BCRC 80197 / JCM 7670 / NBRC 15755 / NCIMB 13165 / 161</strain>
    </source>
</reference>
<comment type="function">
    <text evidence="1">Catalyzes the phosphorylation of pantothenate (Pan), the first step in CoA biosynthesis.</text>
</comment>
<comment type="catalytic activity">
    <reaction evidence="1">
        <text>(R)-pantothenate + ATP = (R)-4'-phosphopantothenate + ADP + H(+)</text>
        <dbReference type="Rhea" id="RHEA:16373"/>
        <dbReference type="ChEBI" id="CHEBI:10986"/>
        <dbReference type="ChEBI" id="CHEBI:15378"/>
        <dbReference type="ChEBI" id="CHEBI:29032"/>
        <dbReference type="ChEBI" id="CHEBI:30616"/>
        <dbReference type="ChEBI" id="CHEBI:456216"/>
        <dbReference type="EC" id="2.7.1.33"/>
    </reaction>
</comment>
<comment type="cofactor">
    <cofactor evidence="1">
        <name>NH4(+)</name>
        <dbReference type="ChEBI" id="CHEBI:28938"/>
    </cofactor>
    <cofactor evidence="1">
        <name>K(+)</name>
        <dbReference type="ChEBI" id="CHEBI:29103"/>
    </cofactor>
    <text evidence="1">A monovalent cation. Ammonium or potassium.</text>
</comment>
<comment type="pathway">
    <text evidence="1">Cofactor biosynthesis; coenzyme A biosynthesis; CoA from (R)-pantothenate: step 1/5.</text>
</comment>
<comment type="subunit">
    <text evidence="1">Homodimer.</text>
</comment>
<comment type="subcellular location">
    <subcellularLocation>
        <location evidence="1">Cytoplasm</location>
    </subcellularLocation>
</comment>
<comment type="similarity">
    <text evidence="1">Belongs to the type III pantothenate kinase family.</text>
</comment>
<proteinExistence type="inferred from homology"/>
<keyword id="KW-0067">ATP-binding</keyword>
<keyword id="KW-0173">Coenzyme A biosynthesis</keyword>
<keyword id="KW-0963">Cytoplasm</keyword>
<keyword id="KW-0418">Kinase</keyword>
<keyword id="KW-0479">Metal-binding</keyword>
<keyword id="KW-0547">Nucleotide-binding</keyword>
<keyword id="KW-0630">Potassium</keyword>
<keyword id="KW-1185">Reference proteome</keyword>
<keyword id="KW-0808">Transferase</keyword>
<sequence>MLLVLNVNNTNTLIAIYSLHADGSTDELRATWRISTRQGQTADEYGILVRSLLASEGLVCEAVRDVVIASVVPPLDWTLRQFCERYFTSKPIFIGPGVKTGLPILTDHPTEVGADRVANCIGAFHRYGGPTIVVDFGTATNFDVVSRKGEFIGGAIAPGLNISAEALFARAARLPRVEIRKPAKMIGTNTVDNLQIGLFWGHIGLVDSILERMISELGHDVKCVATGGLAQVLAGESKYITEVNETLTLDGLRLVYEAQRASREKSGGNRGA</sequence>
<name>COAX_ACIC5</name>
<gene>
    <name evidence="1" type="primary">coaX</name>
    <name type="ordered locus">ACP_2580</name>
</gene>
<feature type="chain" id="PRO_1000165182" description="Type III pantothenate kinase">
    <location>
        <begin position="1"/>
        <end position="272"/>
    </location>
</feature>
<feature type="active site" description="Proton acceptor" evidence="1">
    <location>
        <position position="115"/>
    </location>
</feature>
<feature type="binding site" evidence="1">
    <location>
        <begin position="6"/>
        <end position="13"/>
    </location>
    <ligand>
        <name>ATP</name>
        <dbReference type="ChEBI" id="CHEBI:30616"/>
    </ligand>
</feature>
<feature type="binding site" evidence="1">
    <location>
        <begin position="113"/>
        <end position="116"/>
    </location>
    <ligand>
        <name>substrate</name>
    </ligand>
</feature>
<feature type="binding site" evidence="1">
    <location>
        <position position="135"/>
    </location>
    <ligand>
        <name>K(+)</name>
        <dbReference type="ChEBI" id="CHEBI:29103"/>
    </ligand>
</feature>
<feature type="binding site" evidence="1">
    <location>
        <position position="138"/>
    </location>
    <ligand>
        <name>ATP</name>
        <dbReference type="ChEBI" id="CHEBI:30616"/>
    </ligand>
</feature>
<feature type="binding site" evidence="1">
    <location>
        <position position="190"/>
    </location>
    <ligand>
        <name>substrate</name>
    </ligand>
</feature>
<dbReference type="EC" id="2.7.1.33" evidence="1"/>
<dbReference type="EMBL" id="CP001472">
    <property type="protein sequence ID" value="ACO33971.1"/>
    <property type="molecule type" value="Genomic_DNA"/>
</dbReference>
<dbReference type="RefSeq" id="WP_015897648.1">
    <property type="nucleotide sequence ID" value="NC_012483.1"/>
</dbReference>
<dbReference type="SMR" id="C1F227"/>
<dbReference type="STRING" id="240015.ACP_2580"/>
<dbReference type="KEGG" id="aca:ACP_2580"/>
<dbReference type="eggNOG" id="COG1521">
    <property type="taxonomic scope" value="Bacteria"/>
</dbReference>
<dbReference type="HOGENOM" id="CLU_066627_1_0_0"/>
<dbReference type="InParanoid" id="C1F227"/>
<dbReference type="OrthoDB" id="9804707at2"/>
<dbReference type="UniPathway" id="UPA00241">
    <property type="reaction ID" value="UER00352"/>
</dbReference>
<dbReference type="Proteomes" id="UP000002207">
    <property type="component" value="Chromosome"/>
</dbReference>
<dbReference type="GO" id="GO:0005737">
    <property type="term" value="C:cytoplasm"/>
    <property type="evidence" value="ECO:0007669"/>
    <property type="project" value="UniProtKB-SubCell"/>
</dbReference>
<dbReference type="GO" id="GO:0005524">
    <property type="term" value="F:ATP binding"/>
    <property type="evidence" value="ECO:0007669"/>
    <property type="project" value="UniProtKB-UniRule"/>
</dbReference>
<dbReference type="GO" id="GO:0046872">
    <property type="term" value="F:metal ion binding"/>
    <property type="evidence" value="ECO:0007669"/>
    <property type="project" value="UniProtKB-KW"/>
</dbReference>
<dbReference type="GO" id="GO:0004594">
    <property type="term" value="F:pantothenate kinase activity"/>
    <property type="evidence" value="ECO:0007669"/>
    <property type="project" value="UniProtKB-UniRule"/>
</dbReference>
<dbReference type="GO" id="GO:0015937">
    <property type="term" value="P:coenzyme A biosynthetic process"/>
    <property type="evidence" value="ECO:0007669"/>
    <property type="project" value="UniProtKB-UniRule"/>
</dbReference>
<dbReference type="CDD" id="cd24015">
    <property type="entry name" value="ASKHA_NBD_PanK-III"/>
    <property type="match status" value="1"/>
</dbReference>
<dbReference type="Gene3D" id="3.30.420.40">
    <property type="match status" value="2"/>
</dbReference>
<dbReference type="HAMAP" id="MF_01274">
    <property type="entry name" value="Pantothen_kinase_3"/>
    <property type="match status" value="1"/>
</dbReference>
<dbReference type="InterPro" id="IPR043129">
    <property type="entry name" value="ATPase_NBD"/>
</dbReference>
<dbReference type="InterPro" id="IPR004619">
    <property type="entry name" value="Type_III_PanK"/>
</dbReference>
<dbReference type="NCBIfam" id="TIGR00671">
    <property type="entry name" value="baf"/>
    <property type="match status" value="1"/>
</dbReference>
<dbReference type="NCBIfam" id="NF009855">
    <property type="entry name" value="PRK13321.1"/>
    <property type="match status" value="1"/>
</dbReference>
<dbReference type="PANTHER" id="PTHR34265">
    <property type="entry name" value="TYPE III PANTOTHENATE KINASE"/>
    <property type="match status" value="1"/>
</dbReference>
<dbReference type="PANTHER" id="PTHR34265:SF1">
    <property type="entry name" value="TYPE III PANTOTHENATE KINASE"/>
    <property type="match status" value="1"/>
</dbReference>
<dbReference type="Pfam" id="PF03309">
    <property type="entry name" value="Pan_kinase"/>
    <property type="match status" value="1"/>
</dbReference>
<dbReference type="SUPFAM" id="SSF53067">
    <property type="entry name" value="Actin-like ATPase domain"/>
    <property type="match status" value="2"/>
</dbReference>
<protein>
    <recommendedName>
        <fullName evidence="1">Type III pantothenate kinase</fullName>
        <ecNumber evidence="1">2.7.1.33</ecNumber>
    </recommendedName>
    <alternativeName>
        <fullName evidence="1">PanK-III</fullName>
    </alternativeName>
    <alternativeName>
        <fullName evidence="1">Pantothenic acid kinase</fullName>
    </alternativeName>
</protein>
<organism>
    <name type="scientific">Acidobacterium capsulatum (strain ATCC 51196 / DSM 11244 / BCRC 80197 / JCM 7670 / NBRC 15755 / NCIMB 13165 / 161)</name>
    <dbReference type="NCBI Taxonomy" id="240015"/>
    <lineage>
        <taxon>Bacteria</taxon>
        <taxon>Pseudomonadati</taxon>
        <taxon>Acidobacteriota</taxon>
        <taxon>Terriglobia</taxon>
        <taxon>Terriglobales</taxon>
        <taxon>Acidobacteriaceae</taxon>
        <taxon>Acidobacterium</taxon>
    </lineage>
</organism>
<evidence type="ECO:0000255" key="1">
    <source>
        <dbReference type="HAMAP-Rule" id="MF_01274"/>
    </source>
</evidence>
<accession>C1F227</accession>